<sequence length="377" mass="40678">MTVGERITLADLPLRDDLRGKSPYGAPQLQVPVRLNTNENPHPPSQALVDDVTRSVGEAAAELHRYPDRDAVALRSDLADYLNLRTGVELSVENLWAANGSNEVLQQLLQAFGGPGRSAIGFVPSYSMHPIIADATRTEWLQALRADDFGLDVDTAVREIAARRPDLVFVTSPNNPSGQSVPLEDLRRLLDAMETGILILDEAYGEFSSQPSGVALIDQYPTKLVVSRTMSKAFAFAGGRLGYLVAAPAVIEAMLLVRLPYHLSSLTQAAARAALRHADDTLASVATLIAERDRVANGLSQLGFRVVPSDANFILFGEFADAPATWRRYLDQGVLIRDVGIPGYLRTTIGLAEENDALLTASARLVETELAATLGAL</sequence>
<reference key="1">
    <citation type="submission" date="2006-12" db="EMBL/GenBank/DDBJ databases">
        <title>Complete sequence of chromosome of Mycobacterium sp. KMS.</title>
        <authorList>
            <consortium name="US DOE Joint Genome Institute"/>
            <person name="Copeland A."/>
            <person name="Lucas S."/>
            <person name="Lapidus A."/>
            <person name="Barry K."/>
            <person name="Detter J.C."/>
            <person name="Glavina del Rio T."/>
            <person name="Hammon N."/>
            <person name="Israni S."/>
            <person name="Dalin E."/>
            <person name="Tice H."/>
            <person name="Pitluck S."/>
            <person name="Kiss H."/>
            <person name="Brettin T."/>
            <person name="Bruce D."/>
            <person name="Han C."/>
            <person name="Tapia R."/>
            <person name="Gilna P."/>
            <person name="Schmutz J."/>
            <person name="Larimer F."/>
            <person name="Land M."/>
            <person name="Hauser L."/>
            <person name="Kyrpides N."/>
            <person name="Mikhailova N."/>
            <person name="Miller C.D."/>
            <person name="Richardson P."/>
        </authorList>
    </citation>
    <scope>NUCLEOTIDE SEQUENCE [LARGE SCALE GENOMIC DNA]</scope>
    <source>
        <strain>KMS</strain>
    </source>
</reference>
<dbReference type="EC" id="2.6.1.9" evidence="1"/>
<dbReference type="EMBL" id="CP000518">
    <property type="protein sequence ID" value="ABL92315.1"/>
    <property type="molecule type" value="Genomic_DNA"/>
</dbReference>
<dbReference type="SMR" id="A1UHK7"/>
<dbReference type="STRING" id="189918.Mkms_3121"/>
<dbReference type="KEGG" id="mkm:Mkms_3121"/>
<dbReference type="HOGENOM" id="CLU_017584_3_1_11"/>
<dbReference type="OrthoDB" id="9809616at2"/>
<dbReference type="UniPathway" id="UPA00031">
    <property type="reaction ID" value="UER00012"/>
</dbReference>
<dbReference type="GO" id="GO:0004400">
    <property type="term" value="F:histidinol-phosphate transaminase activity"/>
    <property type="evidence" value="ECO:0007669"/>
    <property type="project" value="UniProtKB-UniRule"/>
</dbReference>
<dbReference type="GO" id="GO:0030170">
    <property type="term" value="F:pyridoxal phosphate binding"/>
    <property type="evidence" value="ECO:0007669"/>
    <property type="project" value="InterPro"/>
</dbReference>
<dbReference type="GO" id="GO:0000105">
    <property type="term" value="P:L-histidine biosynthetic process"/>
    <property type="evidence" value="ECO:0007669"/>
    <property type="project" value="UniProtKB-UniRule"/>
</dbReference>
<dbReference type="CDD" id="cd00609">
    <property type="entry name" value="AAT_like"/>
    <property type="match status" value="1"/>
</dbReference>
<dbReference type="Gene3D" id="3.90.1150.10">
    <property type="entry name" value="Aspartate Aminotransferase, domain 1"/>
    <property type="match status" value="1"/>
</dbReference>
<dbReference type="Gene3D" id="3.40.640.10">
    <property type="entry name" value="Type I PLP-dependent aspartate aminotransferase-like (Major domain)"/>
    <property type="match status" value="1"/>
</dbReference>
<dbReference type="HAMAP" id="MF_01023">
    <property type="entry name" value="HisC_aminotrans_2"/>
    <property type="match status" value="1"/>
</dbReference>
<dbReference type="InterPro" id="IPR001917">
    <property type="entry name" value="Aminotrans_II_pyridoxalP_BS"/>
</dbReference>
<dbReference type="InterPro" id="IPR004839">
    <property type="entry name" value="Aminotransferase_I/II_large"/>
</dbReference>
<dbReference type="InterPro" id="IPR005861">
    <property type="entry name" value="HisP_aminotrans"/>
</dbReference>
<dbReference type="InterPro" id="IPR015424">
    <property type="entry name" value="PyrdxlP-dep_Trfase"/>
</dbReference>
<dbReference type="InterPro" id="IPR015421">
    <property type="entry name" value="PyrdxlP-dep_Trfase_major"/>
</dbReference>
<dbReference type="InterPro" id="IPR015422">
    <property type="entry name" value="PyrdxlP-dep_Trfase_small"/>
</dbReference>
<dbReference type="NCBIfam" id="TIGR01141">
    <property type="entry name" value="hisC"/>
    <property type="match status" value="1"/>
</dbReference>
<dbReference type="NCBIfam" id="NF002877">
    <property type="entry name" value="PRK03317.1"/>
    <property type="match status" value="1"/>
</dbReference>
<dbReference type="PANTHER" id="PTHR42885:SF2">
    <property type="entry name" value="HISTIDINOL-PHOSPHATE AMINOTRANSFERASE"/>
    <property type="match status" value="1"/>
</dbReference>
<dbReference type="PANTHER" id="PTHR42885">
    <property type="entry name" value="HISTIDINOL-PHOSPHATE AMINOTRANSFERASE-RELATED"/>
    <property type="match status" value="1"/>
</dbReference>
<dbReference type="Pfam" id="PF00155">
    <property type="entry name" value="Aminotran_1_2"/>
    <property type="match status" value="1"/>
</dbReference>
<dbReference type="SUPFAM" id="SSF53383">
    <property type="entry name" value="PLP-dependent transferases"/>
    <property type="match status" value="1"/>
</dbReference>
<dbReference type="PROSITE" id="PS00599">
    <property type="entry name" value="AA_TRANSFER_CLASS_2"/>
    <property type="match status" value="1"/>
</dbReference>
<keyword id="KW-0028">Amino-acid biosynthesis</keyword>
<keyword id="KW-0032">Aminotransferase</keyword>
<keyword id="KW-0368">Histidine biosynthesis</keyword>
<keyword id="KW-0663">Pyridoxal phosphate</keyword>
<keyword id="KW-0808">Transferase</keyword>
<comment type="catalytic activity">
    <reaction evidence="1">
        <text>L-histidinol phosphate + 2-oxoglutarate = 3-(imidazol-4-yl)-2-oxopropyl phosphate + L-glutamate</text>
        <dbReference type="Rhea" id="RHEA:23744"/>
        <dbReference type="ChEBI" id="CHEBI:16810"/>
        <dbReference type="ChEBI" id="CHEBI:29985"/>
        <dbReference type="ChEBI" id="CHEBI:57766"/>
        <dbReference type="ChEBI" id="CHEBI:57980"/>
        <dbReference type="EC" id="2.6.1.9"/>
    </reaction>
</comment>
<comment type="cofactor">
    <cofactor evidence="1">
        <name>pyridoxal 5'-phosphate</name>
        <dbReference type="ChEBI" id="CHEBI:597326"/>
    </cofactor>
</comment>
<comment type="pathway">
    <text evidence="1">Amino-acid biosynthesis; L-histidine biosynthesis; L-histidine from 5-phospho-alpha-D-ribose 1-diphosphate: step 7/9.</text>
</comment>
<comment type="subunit">
    <text evidence="1">Homodimer.</text>
</comment>
<comment type="similarity">
    <text evidence="1">Belongs to the class-II pyridoxal-phosphate-dependent aminotransferase family. Histidinol-phosphate aminotransferase subfamily.</text>
</comment>
<accession>A1UHK7</accession>
<feature type="chain" id="PRO_0000319777" description="Histidinol-phosphate aminotransferase">
    <location>
        <begin position="1"/>
        <end position="377"/>
    </location>
</feature>
<feature type="modified residue" description="N6-(pyridoxal phosphate)lysine" evidence="1">
    <location>
        <position position="232"/>
    </location>
</feature>
<organism>
    <name type="scientific">Mycobacterium sp. (strain KMS)</name>
    <dbReference type="NCBI Taxonomy" id="189918"/>
    <lineage>
        <taxon>Bacteria</taxon>
        <taxon>Bacillati</taxon>
        <taxon>Actinomycetota</taxon>
        <taxon>Actinomycetes</taxon>
        <taxon>Mycobacteriales</taxon>
        <taxon>Mycobacteriaceae</taxon>
        <taxon>Mycobacterium</taxon>
    </lineage>
</organism>
<evidence type="ECO:0000255" key="1">
    <source>
        <dbReference type="HAMAP-Rule" id="MF_01023"/>
    </source>
</evidence>
<protein>
    <recommendedName>
        <fullName evidence="1">Histidinol-phosphate aminotransferase</fullName>
        <ecNumber evidence="1">2.6.1.9</ecNumber>
    </recommendedName>
    <alternativeName>
        <fullName evidence="1">Imidazole acetol-phosphate transaminase</fullName>
    </alternativeName>
</protein>
<name>HIS8_MYCSK</name>
<gene>
    <name evidence="1" type="primary">hisC</name>
    <name type="ordered locus">Mkms_3121</name>
</gene>
<proteinExistence type="inferred from homology"/>